<accession>P02634</accession>
<accession>P51964</accession>
<organism>
    <name type="scientific">Rattus norvegicus</name>
    <name type="common">Rat</name>
    <dbReference type="NCBI Taxonomy" id="10116"/>
    <lineage>
        <taxon>Eukaryota</taxon>
        <taxon>Metazoa</taxon>
        <taxon>Chordata</taxon>
        <taxon>Craniata</taxon>
        <taxon>Vertebrata</taxon>
        <taxon>Euteleostomi</taxon>
        <taxon>Mammalia</taxon>
        <taxon>Eutheria</taxon>
        <taxon>Euarchontoglires</taxon>
        <taxon>Glires</taxon>
        <taxon>Rodentia</taxon>
        <taxon>Myomorpha</taxon>
        <taxon>Muroidea</taxon>
        <taxon>Muridae</taxon>
        <taxon>Murinae</taxon>
        <taxon>Rattus</taxon>
    </lineage>
</organism>
<protein>
    <recommendedName>
        <fullName>Protein S100-G</fullName>
    </recommendedName>
    <alternativeName>
        <fullName>9 kDa CaBP</fullName>
    </alternativeName>
    <alternativeName>
        <fullName>Calbindin-D9k</fullName>
    </alternativeName>
    <alternativeName>
        <fullName>Cholecalcin</fullName>
    </alternativeName>
    <alternativeName>
        <fullName>S100 calcium-binding protein G</fullName>
    </alternativeName>
    <alternativeName>
        <fullName>Vitamin D-dependent calcium-binding protein, intestinal</fullName>
        <shortName>CABP</shortName>
    </alternativeName>
</protein>
<keyword id="KW-0007">Acetylation</keyword>
<keyword id="KW-0106">Calcium</keyword>
<keyword id="KW-0903">Direct protein sequencing</keyword>
<keyword id="KW-0479">Metal-binding</keyword>
<keyword id="KW-0597">Phosphoprotein</keyword>
<keyword id="KW-1185">Reference proteome</keyword>
<keyword id="KW-0677">Repeat</keyword>
<keyword id="KW-0848">Vitamin D</keyword>
<evidence type="ECO:0000255" key="1">
    <source>
        <dbReference type="PROSITE-ProRule" id="PRU00448"/>
    </source>
</evidence>
<evidence type="ECO:0000269" key="2">
    <source>
    </source>
</evidence>
<evidence type="ECO:0000305" key="3"/>
<evidence type="ECO:0000305" key="4">
    <source>
    </source>
</evidence>
<evidence type="ECO:0007744" key="5">
    <source>
    </source>
</evidence>
<reference key="1">
    <citation type="journal article" date="1988" name="Eur. J. Biochem.">
        <title>The rat vitamin-D-dependent calcium-binding protein (9-kDa CaBP) gene. Complete nucleotide sequence and structural organization.</title>
        <authorList>
            <person name="Perret C."/>
            <person name="Lomri N."/>
            <person name="Gouhier N."/>
            <person name="Auffray C."/>
            <person name="Thomasset M."/>
        </authorList>
    </citation>
    <scope>NUCLEOTIDE SEQUENCE [GENOMIC DNA]</scope>
</reference>
<reference key="2">
    <citation type="journal article" date="1987" name="Proc. Natl. Acad. Sci. U.S.A.">
        <title>Molecular cloning of the cDNA and chromosomal gene for vitamin D-dependent calcium-binding protein of rat intestine.</title>
        <authorList>
            <person name="Darwish H.M."/>
            <person name="Krisinger J."/>
            <person name="Strom M."/>
            <person name="Deluca H.F."/>
        </authorList>
    </citation>
    <scope>NUCLEOTIDE SEQUENCE [MRNA]</scope>
</reference>
<reference key="3">
    <citation type="journal article" date="1988" name="Proc. Natl. Acad. Sci. U.S.A.">
        <title>Structure and nucleotide sequence of the rat intestinal vitamin D-dependent calcium binding protein gene.</title>
        <authorList>
            <person name="Krisinger J."/>
            <person name="Darwish H."/>
            <person name="Maeda N."/>
            <person name="Deluca H.F."/>
        </authorList>
    </citation>
    <scope>NUCLEOTIDE SEQUENCE [GENOMIC DNA]</scope>
</reference>
<reference key="4">
    <citation type="journal article" date="2004" name="Genome Res.">
        <title>The status, quality, and expansion of the NIH full-length cDNA project: the Mammalian Gene Collection (MGC).</title>
        <authorList>
            <consortium name="The MGC Project Team"/>
        </authorList>
    </citation>
    <scope>NUCLEOTIDE SEQUENCE [LARGE SCALE MRNA]</scope>
    <source>
        <tissue>Pituitary</tissue>
    </source>
</reference>
<reference key="5">
    <citation type="journal article" date="1986" name="Biochem. J.">
        <title>The purification and complete amino acid sequence of the 9000-Mr Ca2+-binding protein from rat placenta. Identity with the vitamin D-dependent intestinal Ca2+-binding protein.</title>
        <authorList>
            <person name="McManus J.P."/>
            <person name="Watson D.C."/>
            <person name="Yaguchi M."/>
        </authorList>
    </citation>
    <scope>PROTEIN SEQUENCE OF 2-79</scope>
    <scope>ACETYLATION AT SER-2</scope>
</reference>
<reference key="6">
    <citation type="journal article" date="1983" name="J. Biol. Chem.">
        <title>Sequence of rat intestinal vitamin D-dependent calcium-binding protein derived from a cDNA clone. Evolutionary implications.</title>
        <authorList>
            <person name="Desplan C."/>
            <person name="Heidmann O."/>
            <person name="Lillie J.W."/>
            <person name="Auffray C."/>
            <person name="Thomasset M."/>
        </authorList>
    </citation>
    <scope>NUCLEOTIDE SEQUENCE [MRNA] OF 11-79</scope>
</reference>
<reference key="7">
    <citation type="journal article" date="1995" name="Endocrinology">
        <title>cDNA sequence identity of a vitamin D-dependent calcium-binding protein in the chick to calbindin D-9K.</title>
        <authorList>
            <person name="Zanello S.B."/>
            <person name="Boland R.L."/>
            <person name="Norman A.W."/>
        </authorList>
    </citation>
    <scope>NUCLEOTIDE SEQUENCE [MRNA] OF 22-71</scope>
</reference>
<reference key="8">
    <citation type="journal article" date="2012" name="Nat. Commun.">
        <title>Quantitative maps of protein phosphorylation sites across 14 different rat organs and tissues.</title>
        <authorList>
            <person name="Lundby A."/>
            <person name="Secher A."/>
            <person name="Lage K."/>
            <person name="Nordsborg N.B."/>
            <person name="Dmytriyev A."/>
            <person name="Lundby C."/>
            <person name="Olsen J.V."/>
        </authorList>
    </citation>
    <scope>PHOSPHORYLATION [LARGE SCALE ANALYSIS] AT SER-42 AND SER-47</scope>
    <scope>IDENTIFICATION BY MASS SPECTROMETRY [LARGE SCALE ANALYSIS]</scope>
</reference>
<sequence length="79" mass="9038">MSAKKSPEEMKSIFQKYAAKEGDPNQLSKEELKLLIQSEFPSLLKASSTLDNLFKELDKNGDGEVSYEEFEVFFKKLSQ</sequence>
<gene>
    <name type="primary">S100g</name>
    <name type="synonym">Calb3</name>
    <name type="synonym">S100d</name>
</gene>
<name>S100G_RAT</name>
<comment type="miscellaneous">
    <text>The synthesis of this protein in the absorptive cells of the rat duodenum is vitamin D3-dependent.</text>
</comment>
<comment type="similarity">
    <text evidence="3">Belongs to the S-100 family.</text>
</comment>
<comment type="caution">
    <text evidence="4">Was originally thought to originate from chick.</text>
</comment>
<feature type="initiator methionine" description="Removed" evidence="2">
    <location>
        <position position="1"/>
    </location>
</feature>
<feature type="chain" id="PRO_0000144030" description="Protein S100-G">
    <location>
        <begin position="2"/>
        <end position="79"/>
    </location>
</feature>
<feature type="domain" description="EF-hand 1" evidence="3">
    <location>
        <begin position="13"/>
        <end position="48"/>
    </location>
</feature>
<feature type="domain" description="EF-hand 2" evidence="1">
    <location>
        <begin position="45"/>
        <end position="79"/>
    </location>
</feature>
<feature type="binding site" evidence="3">
    <location>
        <position position="26"/>
    </location>
    <ligand>
        <name>Ca(2+)</name>
        <dbReference type="ChEBI" id="CHEBI:29108"/>
        <label>1</label>
        <note>low affinity</note>
    </ligand>
</feature>
<feature type="binding site" evidence="3">
    <location>
        <position position="31"/>
    </location>
    <ligand>
        <name>Ca(2+)</name>
        <dbReference type="ChEBI" id="CHEBI:29108"/>
        <label>1</label>
        <note>low affinity</note>
    </ligand>
</feature>
<feature type="binding site" evidence="1">
    <location>
        <position position="58"/>
    </location>
    <ligand>
        <name>Ca(2+)</name>
        <dbReference type="ChEBI" id="CHEBI:29108"/>
        <label>2</label>
        <note>high affinity</note>
    </ligand>
</feature>
<feature type="binding site" evidence="1">
    <location>
        <position position="60"/>
    </location>
    <ligand>
        <name>Ca(2+)</name>
        <dbReference type="ChEBI" id="CHEBI:29108"/>
        <label>2</label>
        <note>high affinity</note>
    </ligand>
</feature>
<feature type="binding site" evidence="1">
    <location>
        <position position="62"/>
    </location>
    <ligand>
        <name>Ca(2+)</name>
        <dbReference type="ChEBI" id="CHEBI:29108"/>
        <label>2</label>
        <note>high affinity</note>
    </ligand>
</feature>
<feature type="binding site" evidence="1">
    <location>
        <position position="64"/>
    </location>
    <ligand>
        <name>Ca(2+)</name>
        <dbReference type="ChEBI" id="CHEBI:29108"/>
        <label>2</label>
        <note>high affinity</note>
    </ligand>
</feature>
<feature type="binding site" evidence="1">
    <location>
        <position position="69"/>
    </location>
    <ligand>
        <name>Ca(2+)</name>
        <dbReference type="ChEBI" id="CHEBI:29108"/>
        <label>2</label>
        <note>high affinity</note>
    </ligand>
</feature>
<feature type="modified residue" description="N-acetylserine" evidence="2">
    <location>
        <position position="2"/>
    </location>
</feature>
<feature type="modified residue" description="Phosphoserine" evidence="5">
    <location>
        <position position="42"/>
    </location>
</feature>
<feature type="modified residue" description="Phosphoserine" evidence="5">
    <location>
        <position position="47"/>
    </location>
</feature>
<feature type="sequence conflict" description="In Ref. 5; AA sequence." evidence="3" ref="5">
    <original>SA</original>
    <variation>AS</variation>
    <location>
        <begin position="2"/>
        <end position="3"/>
    </location>
</feature>
<feature type="sequence conflict" description="In Ref. 6; AAA40843." evidence="3" ref="6">
    <original>S</original>
    <variation>N</variation>
    <location>
        <position position="42"/>
    </location>
</feature>
<feature type="sequence conflict" description="In Ref. 3; AAA40853." evidence="3" ref="3">
    <original>K</original>
    <variation>KQ</variation>
    <location>
        <position position="45"/>
    </location>
</feature>
<feature type="sequence conflict" description="In Ref. 6; AAA40843." evidence="3" ref="6">
    <original>K</original>
    <variation>E</variation>
    <location>
        <position position="55"/>
    </location>
</feature>
<feature type="sequence conflict" description="In Ref. 5; AA sequence." evidence="3" ref="5">
    <original>N</original>
    <variation>D</variation>
    <location>
        <position position="60"/>
    </location>
</feature>
<feature type="sequence conflict" description="In Ref. 6; AAA40843." evidence="3" ref="6">
    <original>G</original>
    <variation>D</variation>
    <location>
        <position position="61"/>
    </location>
</feature>
<proteinExistence type="evidence at protein level"/>
<dbReference type="EMBL" id="X16635">
    <property type="protein sequence ID" value="CAA34627.1"/>
    <property type="molecule type" value="Genomic_DNA"/>
</dbReference>
<dbReference type="EMBL" id="K00994">
    <property type="protein sequence ID" value="AAA40843.1"/>
    <property type="molecule type" value="mRNA"/>
</dbReference>
<dbReference type="EMBL" id="J02954">
    <property type="protein sequence ID" value="AAA42333.1"/>
    <property type="molecule type" value="mRNA"/>
</dbReference>
<dbReference type="EMBL" id="BC059153">
    <property type="protein sequence ID" value="AAH59153.1"/>
    <property type="molecule type" value="mRNA"/>
</dbReference>
<dbReference type="EMBL" id="J04133">
    <property type="protein sequence ID" value="AAA40853.1"/>
    <property type="molecule type" value="Genomic_DNA"/>
</dbReference>
<dbReference type="EMBL" id="S78183">
    <property type="protein sequence ID" value="AAD14276.1"/>
    <property type="molecule type" value="mRNA"/>
</dbReference>
<dbReference type="PIR" id="A31258">
    <property type="entry name" value="KLRTI"/>
</dbReference>
<dbReference type="RefSeq" id="NP_036653.1">
    <property type="nucleotide sequence ID" value="NM_012521.2"/>
</dbReference>
<dbReference type="RefSeq" id="XP_006256950.1">
    <property type="nucleotide sequence ID" value="XM_006256888.3"/>
</dbReference>
<dbReference type="SMR" id="P02634"/>
<dbReference type="FunCoup" id="P02634">
    <property type="interactions" value="20"/>
</dbReference>
<dbReference type="STRING" id="10116.ENSRNOP00000005622"/>
<dbReference type="iPTMnet" id="P02634"/>
<dbReference type="PhosphoSitePlus" id="P02634"/>
<dbReference type="PaxDb" id="10116-ENSRNOP00000005622"/>
<dbReference type="GeneID" id="24249"/>
<dbReference type="KEGG" id="rno:24249"/>
<dbReference type="UCSC" id="RGD:2253">
    <property type="organism name" value="rat"/>
</dbReference>
<dbReference type="AGR" id="RGD:2253"/>
<dbReference type="CTD" id="795"/>
<dbReference type="RGD" id="2253">
    <property type="gene designation" value="S100g"/>
</dbReference>
<dbReference type="VEuPathDB" id="HostDB:ENSRNOG00000004222"/>
<dbReference type="eggNOG" id="ENOG502T3Z3">
    <property type="taxonomic scope" value="Eukaryota"/>
</dbReference>
<dbReference type="HOGENOM" id="CLU_138624_4_0_1"/>
<dbReference type="InParanoid" id="P02634"/>
<dbReference type="OrthoDB" id="26525at2759"/>
<dbReference type="PhylomeDB" id="P02634"/>
<dbReference type="PRO" id="PR:P02634"/>
<dbReference type="Proteomes" id="UP000002494">
    <property type="component" value="Chromosome X"/>
</dbReference>
<dbReference type="Bgee" id="ENSRNOG00000004222">
    <property type="expression patterns" value="Expressed in duodenum and 16 other cell types or tissues"/>
</dbReference>
<dbReference type="GO" id="GO:0016324">
    <property type="term" value="C:apical plasma membrane"/>
    <property type="evidence" value="ECO:0000266"/>
    <property type="project" value="RGD"/>
</dbReference>
<dbReference type="GO" id="GO:0016323">
    <property type="term" value="C:basolateral plasma membrane"/>
    <property type="evidence" value="ECO:0000266"/>
    <property type="project" value="RGD"/>
</dbReference>
<dbReference type="GO" id="GO:0005737">
    <property type="term" value="C:cytoplasm"/>
    <property type="evidence" value="ECO:0000318"/>
    <property type="project" value="GO_Central"/>
</dbReference>
<dbReference type="GO" id="GO:0005509">
    <property type="term" value="F:calcium ion binding"/>
    <property type="evidence" value="ECO:0000318"/>
    <property type="project" value="GO_Central"/>
</dbReference>
<dbReference type="GO" id="GO:0048306">
    <property type="term" value="F:calcium-dependent protein binding"/>
    <property type="evidence" value="ECO:0000318"/>
    <property type="project" value="GO_Central"/>
</dbReference>
<dbReference type="GO" id="GO:0046914">
    <property type="term" value="F:transition metal ion binding"/>
    <property type="evidence" value="ECO:0007669"/>
    <property type="project" value="InterPro"/>
</dbReference>
<dbReference type="GO" id="GO:0005499">
    <property type="term" value="F:vitamin D binding"/>
    <property type="evidence" value="ECO:0007669"/>
    <property type="project" value="UniProtKB-KW"/>
</dbReference>
<dbReference type="CDD" id="cd00213">
    <property type="entry name" value="S-100"/>
    <property type="match status" value="1"/>
</dbReference>
<dbReference type="FunFam" id="1.10.238.10:FF:000236">
    <property type="entry name" value="Protein S100"/>
    <property type="match status" value="1"/>
</dbReference>
<dbReference type="Gene3D" id="1.10.238.10">
    <property type="entry name" value="EF-hand"/>
    <property type="match status" value="1"/>
</dbReference>
<dbReference type="InterPro" id="IPR011992">
    <property type="entry name" value="EF-hand-dom_pair"/>
</dbReference>
<dbReference type="InterPro" id="IPR018247">
    <property type="entry name" value="EF_Hand_1_Ca_BS"/>
</dbReference>
<dbReference type="InterPro" id="IPR002048">
    <property type="entry name" value="EF_hand_dom"/>
</dbReference>
<dbReference type="InterPro" id="IPR034325">
    <property type="entry name" value="S-100_dom"/>
</dbReference>
<dbReference type="InterPro" id="IPR001751">
    <property type="entry name" value="S100/CaBP7/8-like_CS"/>
</dbReference>
<dbReference type="InterPro" id="IPR013787">
    <property type="entry name" value="S100_Ca-bd_sub"/>
</dbReference>
<dbReference type="PANTHER" id="PTHR11639:SF73">
    <property type="entry name" value="PROTEIN S100-G"/>
    <property type="match status" value="1"/>
</dbReference>
<dbReference type="PANTHER" id="PTHR11639">
    <property type="entry name" value="S100 CALCIUM-BINDING PROTEIN"/>
    <property type="match status" value="1"/>
</dbReference>
<dbReference type="Pfam" id="PF00036">
    <property type="entry name" value="EF-hand_1"/>
    <property type="match status" value="1"/>
</dbReference>
<dbReference type="Pfam" id="PF01023">
    <property type="entry name" value="S_100"/>
    <property type="match status" value="1"/>
</dbReference>
<dbReference type="SMART" id="SM00054">
    <property type="entry name" value="EFh"/>
    <property type="match status" value="1"/>
</dbReference>
<dbReference type="SMART" id="SM01394">
    <property type="entry name" value="S_100"/>
    <property type="match status" value="1"/>
</dbReference>
<dbReference type="SUPFAM" id="SSF47473">
    <property type="entry name" value="EF-hand"/>
    <property type="match status" value="1"/>
</dbReference>
<dbReference type="PROSITE" id="PS00018">
    <property type="entry name" value="EF_HAND_1"/>
    <property type="match status" value="1"/>
</dbReference>
<dbReference type="PROSITE" id="PS50222">
    <property type="entry name" value="EF_HAND_2"/>
    <property type="match status" value="1"/>
</dbReference>
<dbReference type="PROSITE" id="PS00303">
    <property type="entry name" value="S100_CABP"/>
    <property type="match status" value="1"/>
</dbReference>